<name>PURA_PARBA</name>
<protein>
    <recommendedName>
        <fullName evidence="2">Adenylosuccinate synthetase</fullName>
        <shortName evidence="2">AMPSase</shortName>
        <shortName evidence="2">AdSS</shortName>
        <ecNumber evidence="2">6.3.4.4</ecNumber>
    </recommendedName>
    <alternativeName>
        <fullName evidence="2">IMP--aspartate ligase</fullName>
    </alternativeName>
</protein>
<comment type="function">
    <text evidence="1">Plays an important role in the de novo pathway and in the salvage pathway of purine nucleotide biosynthesis. Catalyzes the first committed step in the biosynthesis of AMP from IMP (By similarity).</text>
</comment>
<comment type="catalytic activity">
    <reaction evidence="2">
        <text>IMP + L-aspartate + GTP = N(6)-(1,2-dicarboxyethyl)-AMP + GDP + phosphate + 2 H(+)</text>
        <dbReference type="Rhea" id="RHEA:15753"/>
        <dbReference type="ChEBI" id="CHEBI:15378"/>
        <dbReference type="ChEBI" id="CHEBI:29991"/>
        <dbReference type="ChEBI" id="CHEBI:37565"/>
        <dbReference type="ChEBI" id="CHEBI:43474"/>
        <dbReference type="ChEBI" id="CHEBI:57567"/>
        <dbReference type="ChEBI" id="CHEBI:58053"/>
        <dbReference type="ChEBI" id="CHEBI:58189"/>
        <dbReference type="EC" id="6.3.4.4"/>
    </reaction>
</comment>
<comment type="cofactor">
    <cofactor evidence="2">
        <name>Mg(2+)</name>
        <dbReference type="ChEBI" id="CHEBI:18420"/>
    </cofactor>
    <text evidence="2">Binds 1 Mg(2+) ion per subunit.</text>
</comment>
<comment type="pathway">
    <text evidence="2">Purine metabolism; AMP biosynthesis via de novo pathway; AMP from IMP: step 1/2.</text>
</comment>
<comment type="subunit">
    <text evidence="2">Homodimer.</text>
</comment>
<comment type="subcellular location">
    <subcellularLocation>
        <location evidence="2">Cytoplasm</location>
    </subcellularLocation>
</comment>
<comment type="similarity">
    <text evidence="2">Belongs to the adenylosuccinate synthetase family.</text>
</comment>
<comment type="sequence caution" evidence="3">
    <conflict type="erroneous gene model prediction">
        <sequence resource="EMBL-CDS" id="EEH39981"/>
    </conflict>
</comment>
<sequence>MVTIVLGAQFGDEGKGKITDLLSQCATLCCRAAGGHNAGHTIVHDDITYDFHILPSGLISPDCINLVGTGTVVHVPSFFKELDALKAKGLKEADKRIFISDRAQVCFDLHSVVDGLEEAILAGKKVGTTGKGIGPCYSDKASRRGVRIGEVLEEGVVESKLRALEAGYRRQFGELKYDLEDEVKRFNEYRTKLQPYVVDQMAFMHKHRSSPSVLVEGANALLLDIDHGTYPYVTSSCTGLGGAIQGLTLNPTSIKSIVGVVKAYSTRVGSGPFPTEQNNAVGEKLQKAGREFGVTTGRRRRCGWLDMVMCRYSNAINHYTVINLTKLDILDDFDEIKVAVAYKLDGKLLESFPAQADVLDKVEVEYVTFPGWKSNTMGATKWEHLPTNAQRYVEFIEREMGGVPIRWIGTGPARNHMIERI</sequence>
<accession>C1GUH5</accession>
<feature type="chain" id="PRO_0000399348" description="Adenylosuccinate synthetase">
    <location>
        <begin position="1"/>
        <end position="421"/>
    </location>
</feature>
<feature type="active site" description="Proton acceptor" evidence="2">
    <location>
        <position position="12"/>
    </location>
</feature>
<feature type="active site" description="Proton donor" evidence="2">
    <location>
        <position position="40"/>
    </location>
</feature>
<feature type="binding site" evidence="2">
    <location>
        <begin position="11"/>
        <end position="17"/>
    </location>
    <ligand>
        <name>GTP</name>
        <dbReference type="ChEBI" id="CHEBI:37565"/>
    </ligand>
</feature>
<feature type="binding site" description="in other chain" evidence="2">
    <location>
        <begin position="12"/>
        <end position="15"/>
    </location>
    <ligand>
        <name>IMP</name>
        <dbReference type="ChEBI" id="CHEBI:58053"/>
        <note>ligand shared between dimeric partners</note>
    </ligand>
</feature>
<feature type="binding site" evidence="2">
    <location>
        <position position="12"/>
    </location>
    <ligand>
        <name>Mg(2+)</name>
        <dbReference type="ChEBI" id="CHEBI:18420"/>
    </ligand>
</feature>
<feature type="binding site" description="in other chain" evidence="2">
    <location>
        <begin position="37"/>
        <end position="40"/>
    </location>
    <ligand>
        <name>IMP</name>
        <dbReference type="ChEBI" id="CHEBI:58053"/>
        <note>ligand shared between dimeric partners</note>
    </ligand>
</feature>
<feature type="binding site" evidence="2">
    <location>
        <begin position="39"/>
        <end position="41"/>
    </location>
    <ligand>
        <name>GTP</name>
        <dbReference type="ChEBI" id="CHEBI:37565"/>
    </ligand>
</feature>
<feature type="binding site" evidence="2">
    <location>
        <position position="39"/>
    </location>
    <ligand>
        <name>Mg(2+)</name>
        <dbReference type="ChEBI" id="CHEBI:18420"/>
    </ligand>
</feature>
<feature type="binding site" description="in other chain" evidence="2">
    <location>
        <position position="129"/>
    </location>
    <ligand>
        <name>IMP</name>
        <dbReference type="ChEBI" id="CHEBI:58053"/>
        <note>ligand shared between dimeric partners</note>
    </ligand>
</feature>
<feature type="binding site" evidence="2">
    <location>
        <position position="143"/>
    </location>
    <ligand>
        <name>IMP</name>
        <dbReference type="ChEBI" id="CHEBI:58053"/>
        <note>ligand shared between dimeric partners</note>
    </ligand>
</feature>
<feature type="binding site" description="in other chain" evidence="2">
    <location>
        <position position="219"/>
    </location>
    <ligand>
        <name>IMP</name>
        <dbReference type="ChEBI" id="CHEBI:58053"/>
        <note>ligand shared between dimeric partners</note>
    </ligand>
</feature>
<feature type="binding site" description="in other chain" evidence="2">
    <location>
        <position position="234"/>
    </location>
    <ligand>
        <name>IMP</name>
        <dbReference type="ChEBI" id="CHEBI:58053"/>
        <note>ligand shared between dimeric partners</note>
    </ligand>
</feature>
<feature type="binding site" evidence="2">
    <location>
        <begin position="294"/>
        <end position="300"/>
    </location>
    <ligand>
        <name>substrate</name>
    </ligand>
</feature>
<feature type="binding site" description="in other chain" evidence="2">
    <location>
        <position position="298"/>
    </location>
    <ligand>
        <name>IMP</name>
        <dbReference type="ChEBI" id="CHEBI:58053"/>
        <note>ligand shared between dimeric partners</note>
    </ligand>
</feature>
<feature type="binding site" evidence="2">
    <location>
        <position position="300"/>
    </location>
    <ligand>
        <name>GTP</name>
        <dbReference type="ChEBI" id="CHEBI:37565"/>
    </ligand>
</feature>
<feature type="binding site" evidence="2">
    <location>
        <begin position="326"/>
        <end position="328"/>
    </location>
    <ligand>
        <name>GTP</name>
        <dbReference type="ChEBI" id="CHEBI:37565"/>
    </ligand>
</feature>
<feature type="binding site" evidence="2">
    <location>
        <begin position="409"/>
        <end position="411"/>
    </location>
    <ligand>
        <name>GTP</name>
        <dbReference type="ChEBI" id="CHEBI:37565"/>
    </ligand>
</feature>
<organism>
    <name type="scientific">Paracoccidioides lutzii (strain ATCC MYA-826 / Pb01)</name>
    <name type="common">Paracoccidioides brasiliensis</name>
    <dbReference type="NCBI Taxonomy" id="502779"/>
    <lineage>
        <taxon>Eukaryota</taxon>
        <taxon>Fungi</taxon>
        <taxon>Dikarya</taxon>
        <taxon>Ascomycota</taxon>
        <taxon>Pezizomycotina</taxon>
        <taxon>Eurotiomycetes</taxon>
        <taxon>Eurotiomycetidae</taxon>
        <taxon>Onygenales</taxon>
        <taxon>Ajellomycetaceae</taxon>
        <taxon>Paracoccidioides</taxon>
    </lineage>
</organism>
<reference key="1">
    <citation type="journal article" date="2011" name="PLoS Genet.">
        <title>Comparative genomic analysis of human fungal pathogens causing paracoccidioidomycosis.</title>
        <authorList>
            <person name="Desjardins C.A."/>
            <person name="Champion M.D."/>
            <person name="Holder J.W."/>
            <person name="Muszewska A."/>
            <person name="Goldberg J."/>
            <person name="Bailao A.M."/>
            <person name="Brigido M.M."/>
            <person name="Ferreira M.E."/>
            <person name="Garcia A.M."/>
            <person name="Grynberg M."/>
            <person name="Gujja S."/>
            <person name="Heiman D.I."/>
            <person name="Henn M.R."/>
            <person name="Kodira C.D."/>
            <person name="Leon-Narvaez H."/>
            <person name="Longo L.V.G."/>
            <person name="Ma L.-J."/>
            <person name="Malavazi I."/>
            <person name="Matsuo A.L."/>
            <person name="Morais F.V."/>
            <person name="Pereira M."/>
            <person name="Rodriguez-Brito S."/>
            <person name="Sakthikumar S."/>
            <person name="Salem-Izacc S.M."/>
            <person name="Sykes S.M."/>
            <person name="Teixeira M.M."/>
            <person name="Vallejo M.C."/>
            <person name="Walter M.E."/>
            <person name="Yandava C."/>
            <person name="Young S."/>
            <person name="Zeng Q."/>
            <person name="Zucker J."/>
            <person name="Felipe M.S."/>
            <person name="Goldman G.H."/>
            <person name="Haas B.J."/>
            <person name="McEwen J.G."/>
            <person name="Nino-Vega G."/>
            <person name="Puccia R."/>
            <person name="San-Blas G."/>
            <person name="Soares C.M."/>
            <person name="Birren B.W."/>
            <person name="Cuomo C.A."/>
        </authorList>
    </citation>
    <scope>NUCLEOTIDE SEQUENCE [LARGE SCALE GENOMIC DNA]</scope>
    <source>
        <strain>ATCC MYA-826 / Pb01</strain>
    </source>
</reference>
<dbReference type="EC" id="6.3.4.4" evidence="2"/>
<dbReference type="EMBL" id="KN293995">
    <property type="protein sequence ID" value="EEH39981.2"/>
    <property type="status" value="ALT_SEQ"/>
    <property type="molecule type" value="Genomic_DNA"/>
</dbReference>
<dbReference type="RefSeq" id="XP_015701561.1">
    <property type="nucleotide sequence ID" value="XM_015844557.1"/>
</dbReference>
<dbReference type="SMR" id="C1GUH5"/>
<dbReference type="STRING" id="502779.C1GUH5"/>
<dbReference type="GeneID" id="9099427"/>
<dbReference type="KEGG" id="pbl:PAAG_02170"/>
<dbReference type="eggNOG" id="KOG1355">
    <property type="taxonomic scope" value="Eukaryota"/>
</dbReference>
<dbReference type="HOGENOM" id="CLU_029848_3_2_1"/>
<dbReference type="OrthoDB" id="10265645at2759"/>
<dbReference type="UniPathway" id="UPA00075">
    <property type="reaction ID" value="UER00335"/>
</dbReference>
<dbReference type="Proteomes" id="UP000002059">
    <property type="component" value="Partially assembled WGS sequence"/>
</dbReference>
<dbReference type="GO" id="GO:0005737">
    <property type="term" value="C:cytoplasm"/>
    <property type="evidence" value="ECO:0007669"/>
    <property type="project" value="UniProtKB-SubCell"/>
</dbReference>
<dbReference type="GO" id="GO:0004019">
    <property type="term" value="F:adenylosuccinate synthase activity"/>
    <property type="evidence" value="ECO:0007669"/>
    <property type="project" value="UniProtKB-UniRule"/>
</dbReference>
<dbReference type="GO" id="GO:0005525">
    <property type="term" value="F:GTP binding"/>
    <property type="evidence" value="ECO:0007669"/>
    <property type="project" value="UniProtKB-UniRule"/>
</dbReference>
<dbReference type="GO" id="GO:0000287">
    <property type="term" value="F:magnesium ion binding"/>
    <property type="evidence" value="ECO:0007669"/>
    <property type="project" value="UniProtKB-UniRule"/>
</dbReference>
<dbReference type="GO" id="GO:0044208">
    <property type="term" value="P:'de novo' AMP biosynthetic process"/>
    <property type="evidence" value="ECO:0007669"/>
    <property type="project" value="UniProtKB-UniRule"/>
</dbReference>
<dbReference type="GO" id="GO:0046040">
    <property type="term" value="P:IMP metabolic process"/>
    <property type="evidence" value="ECO:0007669"/>
    <property type="project" value="TreeGrafter"/>
</dbReference>
<dbReference type="CDD" id="cd03108">
    <property type="entry name" value="AdSS"/>
    <property type="match status" value="1"/>
</dbReference>
<dbReference type="FunFam" id="1.10.300.10:FF:000001">
    <property type="entry name" value="Adenylosuccinate synthetase"/>
    <property type="match status" value="1"/>
</dbReference>
<dbReference type="FunFam" id="3.90.170.10:FF:000001">
    <property type="entry name" value="Adenylosuccinate synthetase"/>
    <property type="match status" value="1"/>
</dbReference>
<dbReference type="Gene3D" id="3.40.440.10">
    <property type="entry name" value="Adenylosuccinate Synthetase, subunit A, domain 1"/>
    <property type="match status" value="1"/>
</dbReference>
<dbReference type="Gene3D" id="1.10.300.10">
    <property type="entry name" value="Adenylosuccinate Synthetase, subunit A, domain 2"/>
    <property type="match status" value="1"/>
</dbReference>
<dbReference type="Gene3D" id="3.90.170.10">
    <property type="entry name" value="Adenylosuccinate Synthetase, subunit A, domain 3"/>
    <property type="match status" value="1"/>
</dbReference>
<dbReference type="HAMAP" id="MF_00011">
    <property type="entry name" value="Adenylosucc_synth"/>
    <property type="match status" value="1"/>
</dbReference>
<dbReference type="InterPro" id="IPR018220">
    <property type="entry name" value="Adenylosuccin_syn_GTP-bd"/>
</dbReference>
<dbReference type="InterPro" id="IPR033128">
    <property type="entry name" value="Adenylosuccin_syn_Lys_AS"/>
</dbReference>
<dbReference type="InterPro" id="IPR042109">
    <property type="entry name" value="Adenylosuccinate_synth_dom1"/>
</dbReference>
<dbReference type="InterPro" id="IPR042110">
    <property type="entry name" value="Adenylosuccinate_synth_dom2"/>
</dbReference>
<dbReference type="InterPro" id="IPR042111">
    <property type="entry name" value="Adenylosuccinate_synth_dom3"/>
</dbReference>
<dbReference type="InterPro" id="IPR001114">
    <property type="entry name" value="Adenylosuccinate_synthetase"/>
</dbReference>
<dbReference type="InterPro" id="IPR027417">
    <property type="entry name" value="P-loop_NTPase"/>
</dbReference>
<dbReference type="NCBIfam" id="NF002223">
    <property type="entry name" value="PRK01117.1"/>
    <property type="match status" value="1"/>
</dbReference>
<dbReference type="NCBIfam" id="TIGR00184">
    <property type="entry name" value="purA"/>
    <property type="match status" value="1"/>
</dbReference>
<dbReference type="PANTHER" id="PTHR11846">
    <property type="entry name" value="ADENYLOSUCCINATE SYNTHETASE"/>
    <property type="match status" value="1"/>
</dbReference>
<dbReference type="PANTHER" id="PTHR11846:SF0">
    <property type="entry name" value="ADENYLOSUCCINATE SYNTHETASE"/>
    <property type="match status" value="1"/>
</dbReference>
<dbReference type="Pfam" id="PF00709">
    <property type="entry name" value="Adenylsucc_synt"/>
    <property type="match status" value="1"/>
</dbReference>
<dbReference type="SMART" id="SM00788">
    <property type="entry name" value="Adenylsucc_synt"/>
    <property type="match status" value="1"/>
</dbReference>
<dbReference type="SUPFAM" id="SSF52540">
    <property type="entry name" value="P-loop containing nucleoside triphosphate hydrolases"/>
    <property type="match status" value="1"/>
</dbReference>
<dbReference type="PROSITE" id="PS01266">
    <property type="entry name" value="ADENYLOSUCCIN_SYN_1"/>
    <property type="match status" value="1"/>
</dbReference>
<dbReference type="PROSITE" id="PS00513">
    <property type="entry name" value="ADENYLOSUCCIN_SYN_2"/>
    <property type="match status" value="1"/>
</dbReference>
<proteinExistence type="inferred from homology"/>
<gene>
    <name type="ORF">PAAG_02170</name>
</gene>
<evidence type="ECO:0000250" key="1"/>
<evidence type="ECO:0000255" key="2">
    <source>
        <dbReference type="HAMAP-Rule" id="MF_03125"/>
    </source>
</evidence>
<evidence type="ECO:0000305" key="3"/>
<keyword id="KW-0963">Cytoplasm</keyword>
<keyword id="KW-0342">GTP-binding</keyword>
<keyword id="KW-0436">Ligase</keyword>
<keyword id="KW-0460">Magnesium</keyword>
<keyword id="KW-0479">Metal-binding</keyword>
<keyword id="KW-0547">Nucleotide-binding</keyword>
<keyword id="KW-0658">Purine biosynthesis</keyword>
<keyword id="KW-1185">Reference proteome</keyword>